<organism>
    <name type="scientific">Schizosaccharomyces pombe (strain 972 / ATCC 24843)</name>
    <name type="common">Fission yeast</name>
    <dbReference type="NCBI Taxonomy" id="284812"/>
    <lineage>
        <taxon>Eukaryota</taxon>
        <taxon>Fungi</taxon>
        <taxon>Dikarya</taxon>
        <taxon>Ascomycota</taxon>
        <taxon>Taphrinomycotina</taxon>
        <taxon>Schizosaccharomycetes</taxon>
        <taxon>Schizosaccharomycetales</taxon>
        <taxon>Schizosaccharomycetaceae</taxon>
        <taxon>Schizosaccharomyces</taxon>
    </lineage>
</organism>
<gene>
    <name type="ORF">SPBC3D6.16</name>
</gene>
<evidence type="ECO:0000256" key="1">
    <source>
        <dbReference type="SAM" id="MobiDB-lite"/>
    </source>
</evidence>
<feature type="chain" id="PRO_0000303935" description="Uncharacterized protein C3D6.16">
    <location>
        <begin position="1"/>
        <end position="95"/>
    </location>
</feature>
<feature type="region of interest" description="Disordered" evidence="1">
    <location>
        <begin position="46"/>
        <end position="68"/>
    </location>
</feature>
<accession>Q4ZGE2</accession>
<name>YB1G_SCHPO</name>
<sequence>MRTGRKTCTDYINKSFREQIIYKEEWLPRSIPTSLLTAAGSKSCIGDRGTNGRTEAEHDGIPHSRKKVSSAHFNPSTLLFLLKRLGHPVYLREGE</sequence>
<keyword id="KW-1185">Reference proteome</keyword>
<dbReference type="EMBL" id="CU329671">
    <property type="protein sequence ID" value="CAI94400.1"/>
    <property type="molecule type" value="Genomic_DNA"/>
</dbReference>
<dbReference type="RefSeq" id="XP_001713128.1">
    <property type="nucleotide sequence ID" value="XM_001713076.1"/>
</dbReference>
<dbReference type="PaxDb" id="4896-SPBC3D6.16.1"/>
<dbReference type="EnsemblFungi" id="SPBC3D6.16.1">
    <property type="protein sequence ID" value="SPBC3D6.16.1:pep"/>
    <property type="gene ID" value="SPBC3D6.16"/>
</dbReference>
<dbReference type="PomBase" id="SPBC3D6.16"/>
<dbReference type="VEuPathDB" id="FungiDB:SPBC3D6.16"/>
<dbReference type="HOGENOM" id="CLU_2374002_0_0_1"/>
<dbReference type="InParanoid" id="Q4ZGE2"/>
<dbReference type="PRO" id="PR:Q4ZGE2"/>
<dbReference type="Proteomes" id="UP000002485">
    <property type="component" value="Chromosome II"/>
</dbReference>
<reference key="1">
    <citation type="journal article" date="2002" name="Nature">
        <title>The genome sequence of Schizosaccharomyces pombe.</title>
        <authorList>
            <person name="Wood V."/>
            <person name="Gwilliam R."/>
            <person name="Rajandream M.A."/>
            <person name="Lyne M.H."/>
            <person name="Lyne R."/>
            <person name="Stewart A."/>
            <person name="Sgouros J.G."/>
            <person name="Peat N."/>
            <person name="Hayles J."/>
            <person name="Baker S.G."/>
            <person name="Basham D."/>
            <person name="Bowman S."/>
            <person name="Brooks K."/>
            <person name="Brown D."/>
            <person name="Brown S."/>
            <person name="Chillingworth T."/>
            <person name="Churcher C.M."/>
            <person name="Collins M."/>
            <person name="Connor R."/>
            <person name="Cronin A."/>
            <person name="Davis P."/>
            <person name="Feltwell T."/>
            <person name="Fraser A."/>
            <person name="Gentles S."/>
            <person name="Goble A."/>
            <person name="Hamlin N."/>
            <person name="Harris D.E."/>
            <person name="Hidalgo J."/>
            <person name="Hodgson G."/>
            <person name="Holroyd S."/>
            <person name="Hornsby T."/>
            <person name="Howarth S."/>
            <person name="Huckle E.J."/>
            <person name="Hunt S."/>
            <person name="Jagels K."/>
            <person name="James K.D."/>
            <person name="Jones L."/>
            <person name="Jones M."/>
            <person name="Leather S."/>
            <person name="McDonald S."/>
            <person name="McLean J."/>
            <person name="Mooney P."/>
            <person name="Moule S."/>
            <person name="Mungall K.L."/>
            <person name="Murphy L.D."/>
            <person name="Niblett D."/>
            <person name="Odell C."/>
            <person name="Oliver K."/>
            <person name="O'Neil S."/>
            <person name="Pearson D."/>
            <person name="Quail M.A."/>
            <person name="Rabbinowitsch E."/>
            <person name="Rutherford K.M."/>
            <person name="Rutter S."/>
            <person name="Saunders D."/>
            <person name="Seeger K."/>
            <person name="Sharp S."/>
            <person name="Skelton J."/>
            <person name="Simmonds M.N."/>
            <person name="Squares R."/>
            <person name="Squares S."/>
            <person name="Stevens K."/>
            <person name="Taylor K."/>
            <person name="Taylor R.G."/>
            <person name="Tivey A."/>
            <person name="Walsh S.V."/>
            <person name="Warren T."/>
            <person name="Whitehead S."/>
            <person name="Woodward J.R."/>
            <person name="Volckaert G."/>
            <person name="Aert R."/>
            <person name="Robben J."/>
            <person name="Grymonprez B."/>
            <person name="Weltjens I."/>
            <person name="Vanstreels E."/>
            <person name="Rieger M."/>
            <person name="Schaefer M."/>
            <person name="Mueller-Auer S."/>
            <person name="Gabel C."/>
            <person name="Fuchs M."/>
            <person name="Duesterhoeft A."/>
            <person name="Fritzc C."/>
            <person name="Holzer E."/>
            <person name="Moestl D."/>
            <person name="Hilbert H."/>
            <person name="Borzym K."/>
            <person name="Langer I."/>
            <person name="Beck A."/>
            <person name="Lehrach H."/>
            <person name="Reinhardt R."/>
            <person name="Pohl T.M."/>
            <person name="Eger P."/>
            <person name="Zimmermann W."/>
            <person name="Wedler H."/>
            <person name="Wambutt R."/>
            <person name="Purnelle B."/>
            <person name="Goffeau A."/>
            <person name="Cadieu E."/>
            <person name="Dreano S."/>
            <person name="Gloux S."/>
            <person name="Lelaure V."/>
            <person name="Mottier S."/>
            <person name="Galibert F."/>
            <person name="Aves S.J."/>
            <person name="Xiang Z."/>
            <person name="Hunt C."/>
            <person name="Moore K."/>
            <person name="Hurst S.M."/>
            <person name="Lucas M."/>
            <person name="Rochet M."/>
            <person name="Gaillardin C."/>
            <person name="Tallada V.A."/>
            <person name="Garzon A."/>
            <person name="Thode G."/>
            <person name="Daga R.R."/>
            <person name="Cruzado L."/>
            <person name="Jimenez J."/>
            <person name="Sanchez M."/>
            <person name="del Rey F."/>
            <person name="Benito J."/>
            <person name="Dominguez A."/>
            <person name="Revuelta J.L."/>
            <person name="Moreno S."/>
            <person name="Armstrong J."/>
            <person name="Forsburg S.L."/>
            <person name="Cerutti L."/>
            <person name="Lowe T."/>
            <person name="McCombie W.R."/>
            <person name="Paulsen I."/>
            <person name="Potashkin J."/>
            <person name="Shpakovski G.V."/>
            <person name="Ussery D."/>
            <person name="Barrell B.G."/>
            <person name="Nurse P."/>
        </authorList>
    </citation>
    <scope>NUCLEOTIDE SEQUENCE [LARGE SCALE GENOMIC DNA]</scope>
    <source>
        <strain>972 / ATCC 24843</strain>
    </source>
</reference>
<proteinExistence type="predicted"/>
<protein>
    <recommendedName>
        <fullName>Uncharacterized protein C3D6.16</fullName>
    </recommendedName>
</protein>